<proteinExistence type="evidence at protein level"/>
<organismHost>
    <name type="scientific">Homo sapiens</name>
    <name type="common">Human</name>
    <dbReference type="NCBI Taxonomy" id="9606"/>
</organismHost>
<organismHost>
    <name type="scientific">Pan troglodytes</name>
    <name type="common">Chimpanzee</name>
    <dbReference type="NCBI Taxonomy" id="9598"/>
</organismHost>
<protein>
    <recommendedName>
        <fullName evidence="3">Large envelope protein</fullName>
    </recommendedName>
    <alternativeName>
        <fullName evidence="3">L glycoprotein</fullName>
    </alternativeName>
    <alternativeName>
        <fullName evidence="3">L-HBsAg</fullName>
        <shortName evidence="3">LHB</shortName>
    </alternativeName>
    <alternativeName>
        <fullName evidence="3">Large S protein</fullName>
    </alternativeName>
    <alternativeName>
        <fullName evidence="3">Large surface protein</fullName>
    </alternativeName>
    <alternativeName>
        <fullName evidence="3">Major surface antigen</fullName>
    </alternativeName>
</protein>
<dbReference type="EMBL" id="AB048701">
    <property type="protein sequence ID" value="BAB39142.1"/>
    <property type="status" value="ALT_INIT"/>
    <property type="molecule type" value="Genomic_DNA"/>
</dbReference>
<dbReference type="PIR" id="JQ1572">
    <property type="entry name" value="JQ1572"/>
</dbReference>
<dbReference type="PIR" id="JQ2063">
    <property type="entry name" value="JQ2063"/>
</dbReference>
<dbReference type="PIR" id="JQ2066">
    <property type="entry name" value="JQ2066"/>
</dbReference>
<dbReference type="PIR" id="JQ2067">
    <property type="entry name" value="JQ2067"/>
</dbReference>
<dbReference type="PIR" id="JQ2068">
    <property type="entry name" value="JQ2068"/>
</dbReference>
<dbReference type="PIR" id="JQ2069">
    <property type="entry name" value="JQ2069"/>
</dbReference>
<dbReference type="PIR" id="JQ2070">
    <property type="entry name" value="JQ2070"/>
</dbReference>
<dbReference type="PIR" id="JQ2072">
    <property type="entry name" value="JQ2072"/>
</dbReference>
<dbReference type="PIR" id="JQ2076">
    <property type="entry name" value="JQ2076"/>
</dbReference>
<dbReference type="PIR" id="JQ2077">
    <property type="entry name" value="JQ2077"/>
</dbReference>
<dbReference type="PIR" id="JQ2079">
    <property type="entry name" value="JQ2079"/>
</dbReference>
<dbReference type="PIR" id="JQ2081">
    <property type="entry name" value="JQ2081"/>
</dbReference>
<dbReference type="PIR" id="JQ2083">
    <property type="entry name" value="JQ2083"/>
</dbReference>
<dbReference type="SMR" id="Q998M2"/>
<dbReference type="GlyCosmos" id="Q998M2">
    <property type="glycosylation" value="1 site, No reported glycans"/>
</dbReference>
<dbReference type="Proteomes" id="UP000007932">
    <property type="component" value="Genome"/>
</dbReference>
<dbReference type="GO" id="GO:0016020">
    <property type="term" value="C:membrane"/>
    <property type="evidence" value="ECO:0007669"/>
    <property type="project" value="UniProtKB-UniRule"/>
</dbReference>
<dbReference type="GO" id="GO:0019031">
    <property type="term" value="C:viral envelope"/>
    <property type="evidence" value="ECO:0007669"/>
    <property type="project" value="UniProtKB-KW"/>
</dbReference>
<dbReference type="GO" id="GO:0055036">
    <property type="term" value="C:virion membrane"/>
    <property type="evidence" value="ECO:0007669"/>
    <property type="project" value="UniProtKB-SubCell"/>
</dbReference>
<dbReference type="GO" id="GO:0075513">
    <property type="term" value="P:caveolin-mediated endocytosis of virus by host cell"/>
    <property type="evidence" value="ECO:0007669"/>
    <property type="project" value="UniProtKB-KW"/>
</dbReference>
<dbReference type="GO" id="GO:0039654">
    <property type="term" value="P:fusion of virus membrane with host endosome membrane"/>
    <property type="evidence" value="ECO:0007669"/>
    <property type="project" value="UniProtKB-KW"/>
</dbReference>
<dbReference type="GO" id="GO:0019062">
    <property type="term" value="P:virion attachment to host cell"/>
    <property type="evidence" value="ECO:0007669"/>
    <property type="project" value="UniProtKB-UniRule"/>
</dbReference>
<dbReference type="HAMAP" id="MF_04075">
    <property type="entry name" value="HBV_HBSAG"/>
    <property type="match status" value="1"/>
</dbReference>
<dbReference type="InterPro" id="IPR000349">
    <property type="entry name" value="HBV_HBSAG"/>
</dbReference>
<dbReference type="Pfam" id="PF00695">
    <property type="entry name" value="vMSA"/>
    <property type="match status" value="1"/>
</dbReference>
<evidence type="ECO:0000250" key="1">
    <source>
        <dbReference type="UniProtKB" id="P03138"/>
    </source>
</evidence>
<evidence type="ECO:0000250" key="2">
    <source>
        <dbReference type="UniProtKB" id="P03141"/>
    </source>
</evidence>
<evidence type="ECO:0000255" key="3">
    <source>
        <dbReference type="HAMAP-Rule" id="MF_04075"/>
    </source>
</evidence>
<evidence type="ECO:0000256" key="4">
    <source>
        <dbReference type="SAM" id="MobiDB-lite"/>
    </source>
</evidence>
<evidence type="ECO:0000305" key="5"/>
<feature type="initiator methionine" description="Removed; by host" evidence="3">
    <location>
        <position position="1"/>
    </location>
</feature>
<feature type="chain" id="PRO_0000319086" description="Large envelope protein" evidence="3">
    <location>
        <begin position="2"/>
        <end position="389"/>
    </location>
</feature>
<feature type="topological domain" description="Intravirion; in internal conformation" evidence="3">
    <location>
        <begin position="2"/>
        <end position="242"/>
    </location>
</feature>
<feature type="topological domain" description="Virion surface; in external conformation" evidence="3">
    <location>
        <begin position="2"/>
        <end position="170"/>
    </location>
</feature>
<feature type="transmembrane region" description="Helical; Name=TM1; Note=In external conformation" evidence="3">
    <location>
        <begin position="171"/>
        <end position="191"/>
    </location>
</feature>
<feature type="topological domain" description="Intravirion; in external conformation" evidence="3">
    <location>
        <begin position="192"/>
        <end position="242"/>
    </location>
</feature>
<feature type="transmembrane region" description="Helical; Name=TM2" evidence="3">
    <location>
        <begin position="243"/>
        <end position="263"/>
    </location>
</feature>
<feature type="topological domain" description="Virion surface" evidence="3">
    <location>
        <begin position="264"/>
        <end position="337"/>
    </location>
</feature>
<feature type="transmembrane region" description="Helical" evidence="3">
    <location>
        <begin position="338"/>
        <end position="358"/>
    </location>
</feature>
<feature type="topological domain" description="Intravirion" evidence="3">
    <location>
        <begin position="359"/>
        <end position="364"/>
    </location>
</feature>
<feature type="transmembrane region" description="Helical; Name=TM3" evidence="3">
    <location>
        <begin position="365"/>
        <end position="387"/>
    </location>
</feature>
<feature type="topological domain" description="Virion surface" evidence="3">
    <location>
        <begin position="388"/>
        <end position="389"/>
    </location>
</feature>
<feature type="region of interest" description="Pre-S" evidence="3">
    <location>
        <begin position="2"/>
        <end position="163"/>
    </location>
</feature>
<feature type="region of interest" description="Pre-S1" evidence="3">
    <location>
        <begin position="2"/>
        <end position="108"/>
    </location>
</feature>
<feature type="region of interest" description="Disordered" evidence="4">
    <location>
        <begin position="76"/>
        <end position="102"/>
    </location>
</feature>
<feature type="region of interest" description="Pre-S2" evidence="3">
    <location>
        <begin position="109"/>
        <end position="163"/>
    </location>
</feature>
<feature type="region of interest" description="Disordered" evidence="4">
    <location>
        <begin position="133"/>
        <end position="154"/>
    </location>
</feature>
<feature type="compositionally biased region" description="Polar residues" evidence="4">
    <location>
        <begin position="85"/>
        <end position="95"/>
    </location>
</feature>
<feature type="compositionally biased region" description="Low complexity" evidence="4">
    <location>
        <begin position="142"/>
        <end position="154"/>
    </location>
</feature>
<feature type="lipid moiety-binding region" description="N-myristoyl glycine; by host" evidence="3">
    <location>
        <position position="2"/>
    </location>
</feature>
<feature type="glycosylation site" description="N-linked (GlcNAc...) asparagine; by host" evidence="3">
    <location>
        <position position="309"/>
    </location>
</feature>
<feature type="splice variant" id="VSP_031408" description="In isoform S." evidence="5">
    <location>
        <begin position="1"/>
        <end position="163"/>
    </location>
</feature>
<feature type="splice variant" id="VSP_031409" description="In isoform M." evidence="5">
    <location>
        <begin position="1"/>
        <end position="108"/>
    </location>
</feature>
<feature type="modified residue" description="N-acetylmethionine" evidence="1">
    <location sequence="Q998M2-2">
        <position position="1"/>
    </location>
</feature>
<keyword id="KW-0007">Acetylation</keyword>
<keyword id="KW-0024">Alternative initiation</keyword>
<keyword id="KW-0025">Alternative splicing</keyword>
<keyword id="KW-1166">Caveolin-mediated endocytosis of virus by host</keyword>
<keyword id="KW-1170">Fusion of virus membrane with host endosomal membrane</keyword>
<keyword id="KW-1168">Fusion of virus membrane with host membrane</keyword>
<keyword id="KW-0325">Glycoprotein</keyword>
<keyword id="KW-0945">Host-virus interaction</keyword>
<keyword id="KW-0449">Lipoprotein</keyword>
<keyword id="KW-0472">Membrane</keyword>
<keyword id="KW-0519">Myristate</keyword>
<keyword id="KW-0812">Transmembrane</keyword>
<keyword id="KW-1133">Transmembrane helix</keyword>
<keyword id="KW-1161">Viral attachment to host cell</keyword>
<keyword id="KW-0261">Viral envelope protein</keyword>
<keyword id="KW-1162">Viral penetration into host cytoplasm</keyword>
<keyword id="KW-0946">Virion</keyword>
<keyword id="KW-1164">Virus endocytosis by host</keyword>
<keyword id="KW-1160">Virus entry into host cell</keyword>
<sequence length="389" mass="42722">MGQNLSTSNPLGFFPDHQLDPAFRANTNNPDWDFNPNKDTWPDANKVGAGAFGLGFTPPHGGLLGWSPQAQGIMQTLPANPPPASTNRQSGRQPTPLSPPLRTTHPQAMQWNSTTFHQTLQDPRVRGLYLPAGGSSSGTVNPVPTTASPTLSTSSRIGDPALNMENITSGFLGPLLVLQAGFFLLTRILTIPQSLDSWWTSLSFLGGTTVCLGQNSQSPTSNHSPTSCPPTCVGYRWMCLRRFIIFLFILLLCLIFLLVLLDYQGMLPVCPLIPGSSTTSTGPCRTCTTPAQGTSMYPSCCCTKPSDGNCTCIPIPSSWAFGKFLWEWASARFSWLSLLVPFVQWFVGLSPTVWLSVIWMMWYWGPSLYNTLSPFLPLLPIFFYLWVYI</sequence>
<organism>
    <name type="scientific">Hepatitis B virus genotype D subtype ayw (isolate Australia/AustKW/1991)</name>
    <name type="common">HBV-D</name>
    <dbReference type="NCBI Taxonomy" id="489488"/>
    <lineage>
        <taxon>Viruses</taxon>
        <taxon>Riboviria</taxon>
        <taxon>Pararnavirae</taxon>
        <taxon>Artverviricota</taxon>
        <taxon>Revtraviricetes</taxon>
        <taxon>Blubervirales</taxon>
        <taxon>Hepadnaviridae</taxon>
        <taxon>Orthohepadnavirus</taxon>
        <taxon>Hepatitis B virus</taxon>
        <taxon>hepatitis B virus genotype D</taxon>
    </lineage>
</organism>
<accession>Q998M2</accession>
<name>HBSAG_HBVD5</name>
<gene>
    <name evidence="3" type="primary">S</name>
</gene>
<reference key="1">
    <citation type="journal article" date="2001" name="J. Gen. Virol.">
        <title>A novel variant genotype C of hepatitis B virus identified in isolates from Australian Aborigines: complete genome sequence and phylogenetic relatedness.</title>
        <authorList>
            <person name="Sugauchi F."/>
            <person name="Mizokami M."/>
            <person name="Orito E."/>
            <person name="Ohno T."/>
            <person name="Kato H."/>
            <person name="Suzuki S."/>
            <person name="Kimura Y."/>
            <person name="Ueda R."/>
            <person name="Butterworth L.A."/>
            <person name="Cooksley W.G."/>
        </authorList>
    </citation>
    <scope>NUCLEOTIDE SEQUENCE [GENOMIC DNA]</scope>
</reference>
<reference key="2">
    <citation type="journal article" date="1996" name="Intervirology">
        <title>Functions of the large hepatitis B virus surface protein in viral particle morphogenesis.</title>
        <authorList>
            <person name="Bruss V."/>
            <person name="Gerhardt E."/>
            <person name="Vieluf K."/>
            <person name="Wunderlich G."/>
        </authorList>
    </citation>
    <scope>REVIEW</scope>
</reference>
<reference key="3">
    <citation type="journal article" date="1998" name="Adv. Exp. Med. Biol.">
        <title>Role of glycan processing in hepatitis B virus envelope protein trafficking.</title>
        <authorList>
            <person name="Block T.M."/>
            <person name="Lu X."/>
            <person name="Mehta A."/>
            <person name="Park J."/>
            <person name="Blumberg B.S."/>
            <person name="Dwek R."/>
        </authorList>
    </citation>
    <scope>REVIEW</scope>
</reference>
<reference key="4">
    <citation type="journal article" date="2004" name="Virus Res.">
        <title>Envelopment of the hepatitis B virus nucleocapsid.</title>
        <authorList>
            <person name="Bruss V."/>
        </authorList>
    </citation>
    <scope>REVIEW</scope>
</reference>
<reference key="5">
    <citation type="journal article" date="2006" name="Cancer Sci.">
        <title>Hepatitis B virus pre-S mutants, endoplasmic reticulum stress and hepatocarcinogenesis.</title>
        <authorList>
            <person name="Wang H.C."/>
            <person name="Huang W."/>
            <person name="Lai M.D."/>
            <person name="Su I.J."/>
        </authorList>
    </citation>
    <scope>REVIEW</scope>
</reference>
<comment type="function">
    <text evidence="3">The large envelope protein exists in two topological conformations, one which is termed 'external' or Le-HBsAg and the other 'internal' or Li-HBsAg. In its external conformation the protein attaches the virus to cell receptors and thereby initiating infection. This interaction determines the species specificity and liver tropism. This attachment induces virion internalization predominantly through caveolin-mediated endocytosis. The large envelope protein also assures fusion between virion membrane and endosomal membrane. In its internal conformation the protein plays a role in virion morphogenesis and mediates the contact with the nucleocapsid like a matrix protein.</text>
</comment>
<comment type="function">
    <text evidence="3">The middle envelope protein plays an important role in the budding of the virion. It is involved in the induction of budding in a nucleocapsid independent way. In this process the majority of envelope proteins bud to form subviral lipoprotein particles of 22 nm of diameter that do not contain a nucleocapsid.</text>
</comment>
<comment type="subunit">
    <molecule>Isoform L</molecule>
    <text evidence="2">In its internal form (Li-HBsAg), interacts with the capsid protein and with the isoform S. Interacts with host chaperone CANX.</text>
</comment>
<comment type="subunit">
    <molecule>Isoform M</molecule>
    <text evidence="2">Associates with host chaperone CANX through its pre-S2 N glycan; this association may be essential for isoform M proper secretion.</text>
</comment>
<comment type="subunit">
    <molecule>Isoform S</molecule>
    <text evidence="2">Interacts with isoform L. Interacts with the antigens of satellite virus HDV (HDVAgs); this interaction is required for encapsidation of HDV genomic RNA.</text>
</comment>
<comment type="subcellular location">
    <subcellularLocation>
        <location evidence="3">Virion membrane</location>
    </subcellularLocation>
</comment>
<comment type="alternative products">
    <event type="alternative splicing"/>
    <event type="alternative initiation"/>
    <isoform>
        <id>Q998M2-1</id>
        <name>L</name>
        <name>Large envelope protein</name>
        <name>LHB</name>
        <name>L-HBsAg</name>
        <sequence type="displayed"/>
    </isoform>
    <isoform>
        <id>Q998M2-2</id>
        <name>M</name>
        <name>Middle envelope protein</name>
        <name>MHB</name>
        <name>M-HBsAg</name>
        <sequence type="described" ref="VSP_031409"/>
    </isoform>
    <isoform>
        <id>Q998M2-3</id>
        <name>S</name>
        <name>Small envelope protein</name>
        <name>SHB</name>
        <name>S-HBsAg</name>
        <sequence type="described" ref="VSP_031408"/>
    </isoform>
</comment>
<comment type="domain">
    <text evidence="3">The large envelope protein is synthesized with the pre-S region at the cytosolic side of the endoplasmic reticulum and, hence will be within the virion after budding. Therefore the pre-S region is not N-glycosylated. Later a post-translational translocation of N-terminal pre-S and TM1 domains occur in about 50% of proteins at the virion surface. These molecules change their topology by an unknown mechanism, resulting in exposure of pre-S region at virion surface. For isoform M in contrast, the pre-S2 region is translocated cotranslationally to the endoplasmic reticulum lumen and is N-glycosylated.</text>
</comment>
<comment type="PTM">
    <text evidence="1 3">Isoform M is N-terminally acetylated by host at a ratio of 90%, and N-glycosylated by host at the pre-S2 region.</text>
</comment>
<comment type="PTM">
    <text evidence="3">Myristoylated.</text>
</comment>
<comment type="biotechnology">
    <text>Systematic vaccination of individuals at risk of exposure to the virus has been the main method of controlling the morbidity and mortality associated with hepatitis B. The first hepatitis B vaccine was manufactured by the purification and inactivation of HBsAg obtained from the plasma of chronic hepatitis B virus carriers. The vaccine is now produced by recombinant DNA techniques and expression of the S isoform in yeast cells. The pre-S region do not seem to induce strong enough antigenic response.</text>
</comment>
<comment type="similarity">
    <text evidence="3">Belongs to the orthohepadnavirus major surface antigen family.</text>
</comment>
<comment type="sequence caution" evidence="5">
    <conflict type="erroneous initiation">
        <sequence resource="EMBL-CDS" id="BAB39142"/>
    </conflict>
</comment>